<comment type="function">
    <text evidence="1">May function as an inhibitor of Wnt/beta-catenin signaling by indirectly interacting with LRP6 and blocking Wnt3a-dependent LRP6 internalization.</text>
</comment>
<comment type="subcellular location">
    <subcellularLocation>
        <location evidence="1">Cell membrane</location>
        <topology evidence="1">Single-pass type I membrane protein</topology>
    </subcellularLocation>
</comment>
<comment type="domain">
    <text evidence="1">The C-terminus of LRR N-terminal cap (LRRNT) and LRR 1 are essential for the inhibition of the Wnt signaling pathway.</text>
</comment>
<comment type="PTM">
    <text evidence="1">Highly glycosylated.</text>
</comment>
<reference key="1">
    <citation type="submission" date="2005-06" db="EMBL/GenBank/DDBJ databases">
        <title>DNA sequences of macaque genes expressed in brain or testis and its evolutionary implications.</title>
        <authorList>
            <consortium name="International consortium for macaque cDNA sequencing and analysis"/>
        </authorList>
    </citation>
    <scope>NUCLEOTIDE SEQUENCE [LARGE SCALE MRNA]</scope>
    <source>
        <tissue>Testis</tissue>
    </source>
</reference>
<proteinExistence type="evidence at transcript level"/>
<name>TPBG_MACFA</name>
<gene>
    <name type="primary">TPBG</name>
    <name type="ORF">QtsA-11109</name>
</gene>
<protein>
    <recommendedName>
        <fullName>Trophoblast glycoprotein</fullName>
    </recommendedName>
    <alternativeName>
        <fullName>Wnt-activated inhibitory factor 1</fullName>
        <shortName>WAIF1</shortName>
    </alternativeName>
</protein>
<evidence type="ECO:0000250" key="1"/>
<evidence type="ECO:0000250" key="2">
    <source>
        <dbReference type="UniProtKB" id="Q5PQV5"/>
    </source>
</evidence>
<evidence type="ECO:0000255" key="3"/>
<feature type="signal peptide" evidence="3">
    <location>
        <begin position="1"/>
        <end position="34"/>
    </location>
</feature>
<feature type="chain" id="PRO_0000019592" description="Trophoblast glycoprotein">
    <location>
        <begin position="35"/>
        <end position="420"/>
    </location>
</feature>
<feature type="topological domain" description="Extracellular" evidence="3">
    <location>
        <begin position="35"/>
        <end position="355"/>
    </location>
</feature>
<feature type="transmembrane region" description="Helical" evidence="3">
    <location>
        <begin position="356"/>
        <end position="376"/>
    </location>
</feature>
<feature type="topological domain" description="Cytoplasmic" evidence="3">
    <location>
        <begin position="377"/>
        <end position="420"/>
    </location>
</feature>
<feature type="domain" description="LRRNT">
    <location>
        <begin position="53"/>
        <end position="91"/>
    </location>
</feature>
<feature type="repeat" description="LRR 1">
    <location>
        <begin position="92"/>
        <end position="113"/>
    </location>
</feature>
<feature type="repeat" description="LRR 2">
    <location>
        <begin position="116"/>
        <end position="139"/>
    </location>
</feature>
<feature type="repeat" description="LRR 3">
    <location>
        <begin position="141"/>
        <end position="163"/>
    </location>
</feature>
<feature type="repeat" description="LRR 4">
    <location>
        <begin position="172"/>
        <end position="204"/>
    </location>
</feature>
<feature type="repeat" description="LRR 5">
    <location>
        <begin position="209"/>
        <end position="232"/>
    </location>
</feature>
<feature type="repeat" description="LRR 6">
    <location>
        <begin position="233"/>
        <end position="255"/>
    </location>
</feature>
<feature type="repeat" description="LRR 7">
    <location>
        <begin position="256"/>
        <end position="275"/>
    </location>
</feature>
<feature type="domain" description="LRRCT">
    <location>
        <begin position="283"/>
        <end position="346"/>
    </location>
</feature>
<feature type="modified residue" description="Phosphoserine" evidence="2">
    <location>
        <position position="418"/>
    </location>
</feature>
<feature type="glycosylation site" description="N-linked (GlcNAc...) asparagine" evidence="3">
    <location>
        <position position="81"/>
    </location>
</feature>
<feature type="glycosylation site" description="N-linked (GlcNAc...) asparagine" evidence="3">
    <location>
        <position position="124"/>
    </location>
</feature>
<feature type="glycosylation site" description="N-linked (GlcNAc...) asparagine" evidence="3">
    <location>
        <position position="275"/>
    </location>
</feature>
<feature type="disulfide bond" evidence="1">
    <location>
        <begin position="62"/>
        <end position="68"/>
    </location>
</feature>
<feature type="disulfide bond" evidence="1">
    <location>
        <begin position="66"/>
        <end position="77"/>
    </location>
</feature>
<feature type="disulfide bond" evidence="1">
    <location>
        <begin position="298"/>
        <end position="323"/>
    </location>
</feature>
<feature type="disulfide bond" evidence="1">
    <location>
        <begin position="300"/>
        <end position="344"/>
    </location>
</feature>
<sequence>MPGGCSRGPAAGDGRLRLARLALVLLGWVSSSSSTSSASSSSSSAPFLASAASAQPPLPDQCPALCECSEAARTVKCVNRNLTEVPTDLPLYVRNLFLTGNQLAVLPAGAFARRPPLAELAALNLSGSRLDEVRGGAFEHLPSLRQLDLSHNPLAYLSPFAFSGSNASISAPSPLVELILNHIVPPDDKRQNRSFEGMVAAALVAGRALQGLHLLELASNHFLYLPRDVLAQLPSLRYLDLSNNSLVSLTYVSFRNLTHLESLHLEDNALKVLHNGTLAELQGLPHVRVFLDNNPWVCDCHMADMVTWLKQTGVVQGKDRLTCAFPEKMRNRVLLELNSADLDCDPILPPSLQTSYVFLGIVLALIGAIFLLVLYLNRKGIKKWMHNIRDACRDHMEGYHYRYEINADPRLTNLSSNSDV</sequence>
<dbReference type="EMBL" id="AB168308">
    <property type="protein sequence ID" value="BAE00432.1"/>
    <property type="molecule type" value="mRNA"/>
</dbReference>
<dbReference type="RefSeq" id="NP_001306553.1">
    <property type="nucleotide sequence ID" value="NM_001319624.1"/>
</dbReference>
<dbReference type="SMR" id="Q4R8Y9"/>
<dbReference type="STRING" id="9541.ENSMFAP00000010832"/>
<dbReference type="GlyCosmos" id="Q4R8Y9">
    <property type="glycosylation" value="3 sites, No reported glycans"/>
</dbReference>
<dbReference type="eggNOG" id="KOG0619">
    <property type="taxonomic scope" value="Eukaryota"/>
</dbReference>
<dbReference type="Proteomes" id="UP000233100">
    <property type="component" value="Unplaced"/>
</dbReference>
<dbReference type="GO" id="GO:0005886">
    <property type="term" value="C:plasma membrane"/>
    <property type="evidence" value="ECO:0007669"/>
    <property type="project" value="UniProtKB-SubCell"/>
</dbReference>
<dbReference type="GO" id="GO:0090090">
    <property type="term" value="P:negative regulation of canonical Wnt signaling pathway"/>
    <property type="evidence" value="ECO:0007669"/>
    <property type="project" value="TreeGrafter"/>
</dbReference>
<dbReference type="FunFam" id="3.80.10.10:FF:000745">
    <property type="entry name" value="Trophoblast glycoprotein"/>
    <property type="match status" value="1"/>
</dbReference>
<dbReference type="Gene3D" id="3.80.10.10">
    <property type="entry name" value="Ribonuclease Inhibitor"/>
    <property type="match status" value="1"/>
</dbReference>
<dbReference type="InterPro" id="IPR000483">
    <property type="entry name" value="Cys-rich_flank_reg_C"/>
</dbReference>
<dbReference type="InterPro" id="IPR001611">
    <property type="entry name" value="Leu-rich_rpt"/>
</dbReference>
<dbReference type="InterPro" id="IPR003591">
    <property type="entry name" value="Leu-rich_rpt_typical-subtyp"/>
</dbReference>
<dbReference type="InterPro" id="IPR032675">
    <property type="entry name" value="LRR_dom_sf"/>
</dbReference>
<dbReference type="InterPro" id="IPR000372">
    <property type="entry name" value="LRRNT"/>
</dbReference>
<dbReference type="InterPro" id="IPR052286">
    <property type="entry name" value="Wnt_signaling_inhibitor"/>
</dbReference>
<dbReference type="PANTHER" id="PTHR24364">
    <property type="entry name" value="LP06937P"/>
    <property type="match status" value="1"/>
</dbReference>
<dbReference type="PANTHER" id="PTHR24364:SF17">
    <property type="entry name" value="TROPHOBLAST GLYCOPROTEIN"/>
    <property type="match status" value="1"/>
</dbReference>
<dbReference type="Pfam" id="PF13855">
    <property type="entry name" value="LRR_8"/>
    <property type="match status" value="2"/>
</dbReference>
<dbReference type="Pfam" id="PF01463">
    <property type="entry name" value="LRRCT"/>
    <property type="match status" value="1"/>
</dbReference>
<dbReference type="Pfam" id="PF01462">
    <property type="entry name" value="LRRNT"/>
    <property type="match status" value="1"/>
</dbReference>
<dbReference type="PRINTS" id="PR00019">
    <property type="entry name" value="LEURICHRPT"/>
</dbReference>
<dbReference type="SMART" id="SM00369">
    <property type="entry name" value="LRR_TYP"/>
    <property type="match status" value="6"/>
</dbReference>
<dbReference type="SMART" id="SM00082">
    <property type="entry name" value="LRRCT"/>
    <property type="match status" value="1"/>
</dbReference>
<dbReference type="SMART" id="SM00013">
    <property type="entry name" value="LRRNT"/>
    <property type="match status" value="1"/>
</dbReference>
<dbReference type="SUPFAM" id="SSF52058">
    <property type="entry name" value="L domain-like"/>
    <property type="match status" value="1"/>
</dbReference>
<dbReference type="PROSITE" id="PS51450">
    <property type="entry name" value="LRR"/>
    <property type="match status" value="5"/>
</dbReference>
<organism>
    <name type="scientific">Macaca fascicularis</name>
    <name type="common">Crab-eating macaque</name>
    <name type="synonym">Cynomolgus monkey</name>
    <dbReference type="NCBI Taxonomy" id="9541"/>
    <lineage>
        <taxon>Eukaryota</taxon>
        <taxon>Metazoa</taxon>
        <taxon>Chordata</taxon>
        <taxon>Craniata</taxon>
        <taxon>Vertebrata</taxon>
        <taxon>Euteleostomi</taxon>
        <taxon>Mammalia</taxon>
        <taxon>Eutheria</taxon>
        <taxon>Euarchontoglires</taxon>
        <taxon>Primates</taxon>
        <taxon>Haplorrhini</taxon>
        <taxon>Catarrhini</taxon>
        <taxon>Cercopithecidae</taxon>
        <taxon>Cercopithecinae</taxon>
        <taxon>Macaca</taxon>
    </lineage>
</organism>
<accession>Q4R8Y9</accession>
<keyword id="KW-1003">Cell membrane</keyword>
<keyword id="KW-1015">Disulfide bond</keyword>
<keyword id="KW-0325">Glycoprotein</keyword>
<keyword id="KW-0433">Leucine-rich repeat</keyword>
<keyword id="KW-0472">Membrane</keyword>
<keyword id="KW-0597">Phosphoprotein</keyword>
<keyword id="KW-1185">Reference proteome</keyword>
<keyword id="KW-0677">Repeat</keyword>
<keyword id="KW-0732">Signal</keyword>
<keyword id="KW-0812">Transmembrane</keyword>
<keyword id="KW-1133">Transmembrane helix</keyword>